<dbReference type="EC" id="6.1.1.16" evidence="1"/>
<dbReference type="EMBL" id="CP000744">
    <property type="protein sequence ID" value="ABR86761.1"/>
    <property type="molecule type" value="Genomic_DNA"/>
</dbReference>
<dbReference type="RefSeq" id="WP_003153597.1">
    <property type="nucleotide sequence ID" value="NC_009656.1"/>
</dbReference>
<dbReference type="SMR" id="A6V727"/>
<dbReference type="GeneID" id="77221621"/>
<dbReference type="KEGG" id="pap:PSPA7_3508"/>
<dbReference type="HOGENOM" id="CLU_013528_0_1_6"/>
<dbReference type="Proteomes" id="UP000001582">
    <property type="component" value="Chromosome"/>
</dbReference>
<dbReference type="GO" id="GO:0005829">
    <property type="term" value="C:cytosol"/>
    <property type="evidence" value="ECO:0007669"/>
    <property type="project" value="TreeGrafter"/>
</dbReference>
<dbReference type="GO" id="GO:0005524">
    <property type="term" value="F:ATP binding"/>
    <property type="evidence" value="ECO:0007669"/>
    <property type="project" value="UniProtKB-UniRule"/>
</dbReference>
<dbReference type="GO" id="GO:0004817">
    <property type="term" value="F:cysteine-tRNA ligase activity"/>
    <property type="evidence" value="ECO:0007669"/>
    <property type="project" value="UniProtKB-UniRule"/>
</dbReference>
<dbReference type="GO" id="GO:0008270">
    <property type="term" value="F:zinc ion binding"/>
    <property type="evidence" value="ECO:0007669"/>
    <property type="project" value="UniProtKB-UniRule"/>
</dbReference>
<dbReference type="GO" id="GO:0006423">
    <property type="term" value="P:cysteinyl-tRNA aminoacylation"/>
    <property type="evidence" value="ECO:0007669"/>
    <property type="project" value="UniProtKB-UniRule"/>
</dbReference>
<dbReference type="CDD" id="cd07963">
    <property type="entry name" value="Anticodon_Ia_Cys"/>
    <property type="match status" value="1"/>
</dbReference>
<dbReference type="CDD" id="cd00672">
    <property type="entry name" value="CysRS_core"/>
    <property type="match status" value="1"/>
</dbReference>
<dbReference type="FunFam" id="3.40.50.620:FF:000009">
    <property type="entry name" value="Cysteine--tRNA ligase"/>
    <property type="match status" value="1"/>
</dbReference>
<dbReference type="Gene3D" id="1.20.120.1910">
    <property type="entry name" value="Cysteine-tRNA ligase, C-terminal anti-codon recognition domain"/>
    <property type="match status" value="1"/>
</dbReference>
<dbReference type="Gene3D" id="3.40.50.620">
    <property type="entry name" value="HUPs"/>
    <property type="match status" value="1"/>
</dbReference>
<dbReference type="HAMAP" id="MF_00041">
    <property type="entry name" value="Cys_tRNA_synth"/>
    <property type="match status" value="1"/>
</dbReference>
<dbReference type="InterPro" id="IPR015803">
    <property type="entry name" value="Cys-tRNA-ligase"/>
</dbReference>
<dbReference type="InterPro" id="IPR015273">
    <property type="entry name" value="Cys-tRNA-synt_Ia_DALR"/>
</dbReference>
<dbReference type="InterPro" id="IPR024909">
    <property type="entry name" value="Cys-tRNA/MSH_ligase"/>
</dbReference>
<dbReference type="InterPro" id="IPR056411">
    <property type="entry name" value="CysS_C"/>
</dbReference>
<dbReference type="InterPro" id="IPR014729">
    <property type="entry name" value="Rossmann-like_a/b/a_fold"/>
</dbReference>
<dbReference type="InterPro" id="IPR032678">
    <property type="entry name" value="tRNA-synt_1_cat_dom"/>
</dbReference>
<dbReference type="InterPro" id="IPR009080">
    <property type="entry name" value="tRNAsynth_Ia_anticodon-bd"/>
</dbReference>
<dbReference type="NCBIfam" id="TIGR00435">
    <property type="entry name" value="cysS"/>
    <property type="match status" value="1"/>
</dbReference>
<dbReference type="PANTHER" id="PTHR10890:SF3">
    <property type="entry name" value="CYSTEINE--TRNA LIGASE, CYTOPLASMIC"/>
    <property type="match status" value="1"/>
</dbReference>
<dbReference type="PANTHER" id="PTHR10890">
    <property type="entry name" value="CYSTEINYL-TRNA SYNTHETASE"/>
    <property type="match status" value="1"/>
</dbReference>
<dbReference type="Pfam" id="PF23493">
    <property type="entry name" value="CysS_C"/>
    <property type="match status" value="1"/>
</dbReference>
<dbReference type="Pfam" id="PF09190">
    <property type="entry name" value="DALR_2"/>
    <property type="match status" value="1"/>
</dbReference>
<dbReference type="Pfam" id="PF01406">
    <property type="entry name" value="tRNA-synt_1e"/>
    <property type="match status" value="1"/>
</dbReference>
<dbReference type="PRINTS" id="PR00983">
    <property type="entry name" value="TRNASYNTHCYS"/>
</dbReference>
<dbReference type="SMART" id="SM00840">
    <property type="entry name" value="DALR_2"/>
    <property type="match status" value="1"/>
</dbReference>
<dbReference type="SUPFAM" id="SSF47323">
    <property type="entry name" value="Anticodon-binding domain of a subclass of class I aminoacyl-tRNA synthetases"/>
    <property type="match status" value="1"/>
</dbReference>
<dbReference type="SUPFAM" id="SSF52374">
    <property type="entry name" value="Nucleotidylyl transferase"/>
    <property type="match status" value="1"/>
</dbReference>
<reference key="1">
    <citation type="submission" date="2007-06" db="EMBL/GenBank/DDBJ databases">
        <authorList>
            <person name="Dodson R.J."/>
            <person name="Harkins D."/>
            <person name="Paulsen I.T."/>
        </authorList>
    </citation>
    <scope>NUCLEOTIDE SEQUENCE [LARGE SCALE GENOMIC DNA]</scope>
    <source>
        <strain>DSM 24068 / PA7</strain>
    </source>
</reference>
<sequence length="460" mass="51275">MLQIYNTLSKTKEVFTPLVGNQVRMYVCGMTVYDYCHLGHGRSMVAFDVITRWLRHRGYDLTYVRNITDIDDKIINRANENGEPFDVLTERMIAAMHEDEARLNILKPDQEPRATDHIAGMHAMIQTLIDKGYAYAPGNGDVYYRVGRFAGYGKLSRRRVEDLRIGARIEPGEAKEDPLDFVLWKGAKPGEPSWSSPWGEGRPGWHIECSVMSTCCLGDSFDIHGGGNDLEFPHHENEIAQSEAATGKPYAKSWLHCGMITINGEKMSKSLGNFFTIREVLEKYHPEVVRYLLIASHYRSPINYSEENLREAKAALDRFYNALKGLPEAAPAEAAEHVERFAAAMDDDFNTAGACSVLFELAREVNRLRDSDLPAAAALAARLKQLAGLLGVLQLEPEAFLQAGAEGKVDAAEVEALIQARLEARAAKNWAESDRIRDQLTAMGVVLEDGKGGTTWRLAD</sequence>
<organism>
    <name type="scientific">Pseudomonas paraeruginosa (strain DSM 24068 / PA7)</name>
    <name type="common">Pseudomonas aeruginosa (strain PA7)</name>
    <dbReference type="NCBI Taxonomy" id="381754"/>
    <lineage>
        <taxon>Bacteria</taxon>
        <taxon>Pseudomonadati</taxon>
        <taxon>Pseudomonadota</taxon>
        <taxon>Gammaproteobacteria</taxon>
        <taxon>Pseudomonadales</taxon>
        <taxon>Pseudomonadaceae</taxon>
        <taxon>Pseudomonas</taxon>
        <taxon>Pseudomonas paraeruginosa</taxon>
    </lineage>
</organism>
<feature type="chain" id="PRO_0000332876" description="Cysteine--tRNA ligase">
    <location>
        <begin position="1"/>
        <end position="460"/>
    </location>
</feature>
<feature type="short sequence motif" description="'HIGH' region">
    <location>
        <begin position="30"/>
        <end position="40"/>
    </location>
</feature>
<feature type="short sequence motif" description="'KMSKS' region">
    <location>
        <begin position="266"/>
        <end position="270"/>
    </location>
</feature>
<feature type="binding site" evidence="1">
    <location>
        <position position="28"/>
    </location>
    <ligand>
        <name>Zn(2+)</name>
        <dbReference type="ChEBI" id="CHEBI:29105"/>
    </ligand>
</feature>
<feature type="binding site" evidence="1">
    <location>
        <position position="209"/>
    </location>
    <ligand>
        <name>Zn(2+)</name>
        <dbReference type="ChEBI" id="CHEBI:29105"/>
    </ligand>
</feature>
<feature type="binding site" evidence="1">
    <location>
        <position position="234"/>
    </location>
    <ligand>
        <name>Zn(2+)</name>
        <dbReference type="ChEBI" id="CHEBI:29105"/>
    </ligand>
</feature>
<feature type="binding site" evidence="1">
    <location>
        <position position="238"/>
    </location>
    <ligand>
        <name>Zn(2+)</name>
        <dbReference type="ChEBI" id="CHEBI:29105"/>
    </ligand>
</feature>
<feature type="binding site" evidence="1">
    <location>
        <position position="269"/>
    </location>
    <ligand>
        <name>ATP</name>
        <dbReference type="ChEBI" id="CHEBI:30616"/>
    </ligand>
</feature>
<accession>A6V727</accession>
<comment type="catalytic activity">
    <reaction evidence="1">
        <text>tRNA(Cys) + L-cysteine + ATP = L-cysteinyl-tRNA(Cys) + AMP + diphosphate</text>
        <dbReference type="Rhea" id="RHEA:17773"/>
        <dbReference type="Rhea" id="RHEA-COMP:9661"/>
        <dbReference type="Rhea" id="RHEA-COMP:9679"/>
        <dbReference type="ChEBI" id="CHEBI:30616"/>
        <dbReference type="ChEBI" id="CHEBI:33019"/>
        <dbReference type="ChEBI" id="CHEBI:35235"/>
        <dbReference type="ChEBI" id="CHEBI:78442"/>
        <dbReference type="ChEBI" id="CHEBI:78517"/>
        <dbReference type="ChEBI" id="CHEBI:456215"/>
        <dbReference type="EC" id="6.1.1.16"/>
    </reaction>
</comment>
<comment type="cofactor">
    <cofactor evidence="1">
        <name>Zn(2+)</name>
        <dbReference type="ChEBI" id="CHEBI:29105"/>
    </cofactor>
    <text evidence="1">Binds 1 zinc ion per subunit.</text>
</comment>
<comment type="subunit">
    <text evidence="1">Monomer.</text>
</comment>
<comment type="subcellular location">
    <subcellularLocation>
        <location evidence="1">Cytoplasm</location>
    </subcellularLocation>
</comment>
<comment type="similarity">
    <text evidence="1">Belongs to the class-I aminoacyl-tRNA synthetase family.</text>
</comment>
<name>SYC_PSEP7</name>
<proteinExistence type="inferred from homology"/>
<protein>
    <recommendedName>
        <fullName evidence="1">Cysteine--tRNA ligase</fullName>
        <ecNumber evidence="1">6.1.1.16</ecNumber>
    </recommendedName>
    <alternativeName>
        <fullName evidence="1">Cysteinyl-tRNA synthetase</fullName>
        <shortName evidence="1">CysRS</shortName>
    </alternativeName>
</protein>
<gene>
    <name evidence="1" type="primary">cysS</name>
    <name type="ordered locus">PSPA7_3508</name>
</gene>
<evidence type="ECO:0000255" key="1">
    <source>
        <dbReference type="HAMAP-Rule" id="MF_00041"/>
    </source>
</evidence>
<keyword id="KW-0030">Aminoacyl-tRNA synthetase</keyword>
<keyword id="KW-0067">ATP-binding</keyword>
<keyword id="KW-0963">Cytoplasm</keyword>
<keyword id="KW-0436">Ligase</keyword>
<keyword id="KW-0479">Metal-binding</keyword>
<keyword id="KW-0547">Nucleotide-binding</keyword>
<keyword id="KW-0648">Protein biosynthesis</keyword>
<keyword id="KW-0862">Zinc</keyword>